<name>NSA1_VANPO</name>
<dbReference type="EMBL" id="DS480402">
    <property type="protein sequence ID" value="EDO17554.1"/>
    <property type="molecule type" value="Genomic_DNA"/>
</dbReference>
<dbReference type="RefSeq" id="XP_001645412.1">
    <property type="nucleotide sequence ID" value="XM_001645362.1"/>
</dbReference>
<dbReference type="SMR" id="A7TJL1"/>
<dbReference type="FunCoup" id="A7TJL1">
    <property type="interactions" value="699"/>
</dbReference>
<dbReference type="STRING" id="436907.A7TJL1"/>
<dbReference type="GeneID" id="5545777"/>
<dbReference type="KEGG" id="vpo:Kpol_534p34"/>
<dbReference type="eggNOG" id="KOG3881">
    <property type="taxonomic scope" value="Eukaryota"/>
</dbReference>
<dbReference type="HOGENOM" id="CLU_033769_4_0_1"/>
<dbReference type="InParanoid" id="A7TJL1"/>
<dbReference type="OMA" id="IWEAKNV"/>
<dbReference type="OrthoDB" id="18388at2759"/>
<dbReference type="PhylomeDB" id="A7TJL1"/>
<dbReference type="Proteomes" id="UP000000267">
    <property type="component" value="Unassembled WGS sequence"/>
</dbReference>
<dbReference type="GO" id="GO:0005730">
    <property type="term" value="C:nucleolus"/>
    <property type="evidence" value="ECO:0007669"/>
    <property type="project" value="UniProtKB-SubCell"/>
</dbReference>
<dbReference type="GO" id="GO:0030687">
    <property type="term" value="C:preribosome, large subunit precursor"/>
    <property type="evidence" value="ECO:0007669"/>
    <property type="project" value="TreeGrafter"/>
</dbReference>
<dbReference type="GO" id="GO:0042273">
    <property type="term" value="P:ribosomal large subunit biogenesis"/>
    <property type="evidence" value="ECO:0007669"/>
    <property type="project" value="InterPro"/>
</dbReference>
<dbReference type="GO" id="GO:0006364">
    <property type="term" value="P:rRNA processing"/>
    <property type="evidence" value="ECO:0007669"/>
    <property type="project" value="UniProtKB-KW"/>
</dbReference>
<dbReference type="CDD" id="cd22858">
    <property type="entry name" value="Nsa1"/>
    <property type="match status" value="1"/>
</dbReference>
<dbReference type="InterPro" id="IPR036322">
    <property type="entry name" value="WD40_repeat_dom_sf"/>
</dbReference>
<dbReference type="InterPro" id="IPR037379">
    <property type="entry name" value="WDR74/Nsa1"/>
</dbReference>
<dbReference type="PANTHER" id="PTHR16038">
    <property type="entry name" value="NOP SEVEN ASSOCIATED PROTEIN 1"/>
    <property type="match status" value="1"/>
</dbReference>
<dbReference type="PANTHER" id="PTHR16038:SF4">
    <property type="entry name" value="WD REPEAT-CONTAINING PROTEIN 74"/>
    <property type="match status" value="1"/>
</dbReference>
<dbReference type="SUPFAM" id="SSF50978">
    <property type="entry name" value="WD40 repeat-like"/>
    <property type="match status" value="1"/>
</dbReference>
<sequence length="445" mass="51175">MRVLVSCTDGGSLKEVIFNSGTDTSVQTALQPLHVETHLEQGLNNYINKISQLSNGEFLIARSNGVVELVKATLLPKEYTEEPPEGKQFPSFDVNKFEVVDTLAGLLDNKRLEPLYQKSKKRTKLIDEFVTVTLLNEKLNIYILASKSGLIHIIKHNSKKSKLEKINSFEVKAPLDFAQLYDLEGKMDKYILGYGGEENLVKLIEINKNFTDLKQIWEAKNVKNDRLDMKVPIWPVSLKFLEPYKGEKLEKDKINYQFTTVSRYSHLGKYRTQHGRKPLEYKDLLPNREPLTQLEVISEKVTPIGNAQTSEFSDITFITTDTKKDVLKFNHDGRLLLKYGKGDILGSPTFITISKGKYLLQGGLDRYLRVFDINTNERIAKIYVGAKINYITLLDDDEIELPEVAKEKEKMKEKSKKRELEFEEDNDDQLWNDLDSIKHHKKSKI</sequence>
<gene>
    <name type="primary">NSA1</name>
    <name type="ORF">Kpol_534p34</name>
</gene>
<feature type="chain" id="PRO_0000320404" description="Ribosome biogenesis protein NSA1">
    <location>
        <begin position="1"/>
        <end position="445"/>
    </location>
</feature>
<organism>
    <name type="scientific">Vanderwaltozyma polyspora (strain ATCC 22028 / DSM 70294 / BCRC 21397 / CBS 2163 / NBRC 10782 / NRRL Y-8283 / UCD 57-17)</name>
    <name type="common">Kluyveromyces polysporus</name>
    <dbReference type="NCBI Taxonomy" id="436907"/>
    <lineage>
        <taxon>Eukaryota</taxon>
        <taxon>Fungi</taxon>
        <taxon>Dikarya</taxon>
        <taxon>Ascomycota</taxon>
        <taxon>Saccharomycotina</taxon>
        <taxon>Saccharomycetes</taxon>
        <taxon>Saccharomycetales</taxon>
        <taxon>Saccharomycetaceae</taxon>
        <taxon>Vanderwaltozyma</taxon>
    </lineage>
</organism>
<accession>A7TJL1</accession>
<comment type="function">
    <text evidence="1">Involved in the biogenesis of the 60S ribosomal subunit.</text>
</comment>
<comment type="subunit">
    <text evidence="1">Component of the pre-66S ribosomal particle.</text>
</comment>
<comment type="subcellular location">
    <subcellularLocation>
        <location evidence="1">Nucleus</location>
        <location evidence="1">Nucleolus</location>
    </subcellularLocation>
</comment>
<comment type="similarity">
    <text evidence="2">Belongs to the NSA1 family.</text>
</comment>
<evidence type="ECO:0000250" key="1"/>
<evidence type="ECO:0000305" key="2"/>
<keyword id="KW-0539">Nucleus</keyword>
<keyword id="KW-1185">Reference proteome</keyword>
<keyword id="KW-0690">Ribosome biogenesis</keyword>
<keyword id="KW-0698">rRNA processing</keyword>
<proteinExistence type="inferred from homology"/>
<protein>
    <recommendedName>
        <fullName>Ribosome biogenesis protein NSA1</fullName>
    </recommendedName>
</protein>
<reference key="1">
    <citation type="journal article" date="2007" name="Proc. Natl. Acad. Sci. U.S.A.">
        <title>Independent sorting-out of thousands of duplicated gene pairs in two yeast species descended from a whole-genome duplication.</title>
        <authorList>
            <person name="Scannell D.R."/>
            <person name="Frank A.C."/>
            <person name="Conant G.C."/>
            <person name="Byrne K.P."/>
            <person name="Woolfit M."/>
            <person name="Wolfe K.H."/>
        </authorList>
    </citation>
    <scope>NUCLEOTIDE SEQUENCE [LARGE SCALE GENOMIC DNA]</scope>
    <source>
        <strain>ATCC 22028 / DSM 70294 / BCRC 21397 / CBS 2163 / NBRC 10782 / NRRL Y-8283 / UCD 57-17</strain>
    </source>
</reference>